<name>FRG1_MOUSE</name>
<protein>
    <recommendedName>
        <fullName>Protein FRG1</fullName>
    </recommendedName>
    <alternativeName>
        <fullName>FSHD region gene 1 protein</fullName>
    </alternativeName>
</protein>
<proteinExistence type="evidence at protein level"/>
<sequence>MAEYSYVKSTKLVLKGTKAKSKKKKSKDKKRKREEDEETQLDIVGIWWTVSNFGEISGTIAIEMDKGAYIHALDNGLFTLGAPHREVDEGPSPPEQFTAVKLSDSRIALKSGYGKYLGINSDGLVVGRSDAIGPREQWEPVFQDGKMALLASNSCFIRCNEAGDIEAKNKTAGEEEMIKIRSCAERETKKKDDIPEEDKGSVKQCEINYVKKFQSFQDHKLKISKEDSKILKKARKDGFLHETLLDRRAKLKADRYCK</sequence>
<organism>
    <name type="scientific">Mus musculus</name>
    <name type="common">Mouse</name>
    <dbReference type="NCBI Taxonomy" id="10090"/>
    <lineage>
        <taxon>Eukaryota</taxon>
        <taxon>Metazoa</taxon>
        <taxon>Chordata</taxon>
        <taxon>Craniata</taxon>
        <taxon>Vertebrata</taxon>
        <taxon>Euteleostomi</taxon>
        <taxon>Mammalia</taxon>
        <taxon>Eutheria</taxon>
        <taxon>Euarchontoglires</taxon>
        <taxon>Glires</taxon>
        <taxon>Rodentia</taxon>
        <taxon>Myomorpha</taxon>
        <taxon>Muroidea</taxon>
        <taxon>Muridae</taxon>
        <taxon>Murinae</taxon>
        <taxon>Mus</taxon>
        <taxon>Mus</taxon>
    </lineage>
</organism>
<feature type="chain" id="PRO_0000220768" description="Protein FRG1">
    <location>
        <begin position="1"/>
        <end position="258"/>
    </location>
</feature>
<feature type="region of interest" description="Disordered" evidence="4">
    <location>
        <begin position="16"/>
        <end position="35"/>
    </location>
</feature>
<feature type="short sequence motif" description="Nuclear localization signal" evidence="3">
    <location>
        <begin position="22"/>
        <end position="32"/>
    </location>
</feature>
<feature type="short sequence motif" description="Bipartite nuclear localization signal" evidence="3">
    <location>
        <begin position="235"/>
        <end position="251"/>
    </location>
</feature>
<feature type="compositionally biased region" description="Basic residues" evidence="4">
    <location>
        <begin position="17"/>
        <end position="32"/>
    </location>
</feature>
<feature type="sequence conflict" description="In Ref. 1; AAB39540." evidence="8" ref="1">
    <original>P</original>
    <variation>Q</variation>
    <location>
        <position position="140"/>
    </location>
</feature>
<feature type="strand" evidence="11">
    <location>
        <begin position="47"/>
        <end position="49"/>
    </location>
</feature>
<feature type="helix" evidence="11">
    <location>
        <begin position="53"/>
        <end position="55"/>
    </location>
</feature>
<feature type="strand" evidence="11">
    <location>
        <begin position="58"/>
        <end position="63"/>
    </location>
</feature>
<feature type="strand" evidence="11">
    <location>
        <begin position="65"/>
        <end position="67"/>
    </location>
</feature>
<feature type="strand" evidence="11">
    <location>
        <begin position="69"/>
        <end position="72"/>
    </location>
</feature>
<feature type="strand" evidence="11">
    <location>
        <begin position="78"/>
        <end position="80"/>
    </location>
</feature>
<feature type="strand" evidence="11">
    <location>
        <begin position="85"/>
        <end position="88"/>
    </location>
</feature>
<feature type="turn" evidence="11">
    <location>
        <begin position="93"/>
        <end position="95"/>
    </location>
</feature>
<feature type="strand" evidence="11">
    <location>
        <begin position="97"/>
        <end position="101"/>
    </location>
</feature>
<feature type="strand" evidence="11">
    <location>
        <begin position="103"/>
        <end position="105"/>
    </location>
</feature>
<feature type="strand" evidence="11">
    <location>
        <begin position="107"/>
        <end position="111"/>
    </location>
</feature>
<feature type="strand" evidence="11">
    <location>
        <begin position="116"/>
        <end position="119"/>
    </location>
</feature>
<feature type="strand" evidence="11">
    <location>
        <begin position="121"/>
        <end position="127"/>
    </location>
</feature>
<feature type="turn" evidence="11">
    <location>
        <begin position="134"/>
        <end position="136"/>
    </location>
</feature>
<feature type="strand" evidence="11">
    <location>
        <begin position="137"/>
        <end position="141"/>
    </location>
</feature>
<feature type="strand" evidence="11">
    <location>
        <begin position="148"/>
        <end position="151"/>
    </location>
</feature>
<feature type="strand" evidence="11">
    <location>
        <begin position="156"/>
        <end position="159"/>
    </location>
</feature>
<feature type="strand" evidence="11">
    <location>
        <begin position="161"/>
        <end position="163"/>
    </location>
</feature>
<feature type="strand" evidence="11">
    <location>
        <begin position="165"/>
        <end position="167"/>
    </location>
</feature>
<feature type="turn" evidence="11">
    <location>
        <begin position="174"/>
        <end position="176"/>
    </location>
</feature>
<feature type="strand" evidence="11">
    <location>
        <begin position="179"/>
        <end position="182"/>
    </location>
</feature>
<comment type="function">
    <text evidence="7">Binds to mRNA in a sequence-independent manner. May play a role in regulation of pre-mRNA splicing or in the assembly of rRNA into ribosomal subunits. May be involved in mRNA transport. May be involved in epigenetic regulation of muscle differentiation through regulation of activity of the histone-lysine N-methyltransferase KMT5B.</text>
</comment>
<comment type="subunit">
    <text evidence="1 2 7">Homodimer and homotetramer in solution. Identified in the spliceosome C complex. Interacts (via N-terminus) with KPNA2 and NXF1/TAP. Interacts with F-actin with a stoichiometry of 2:1 (By similarity). Interacts with KMT5B (via C-terminus). Interacts with GARIN3, SMN1 and PABPN1 (By similarity).</text>
</comment>
<comment type="subcellular location">
    <subcellularLocation>
        <location evidence="2">Nucleus</location>
        <location evidence="2">Cajal body</location>
    </subcellularLocation>
    <subcellularLocation>
        <location evidence="5 6">Nucleus</location>
        <location evidence="5 6">Nucleolus</location>
    </subcellularLocation>
    <subcellularLocation>
        <location evidence="6">Cytoplasm</location>
    </subcellularLocation>
    <subcellularLocation>
        <location evidence="6">Cytoplasm</location>
        <location evidence="6">Myofibril</location>
        <location evidence="6">Sarcomere</location>
        <location evidence="6">Z line</location>
    </subcellularLocation>
    <text evidence="6">Localization changes during myogenesis from mainly cytoplasmic in undifferentiated myoblasts, to strongly nucleolar in early myotubes and back to cytoplasmic 5 days post-differentiation. Localized at the Z-line in the sarcomere of matured myotubes 8 days post-differentiation.</text>
</comment>
<comment type="miscellaneous">
    <text evidence="9 10">Overexpression of Frg1 leads to development of facioscapulohumeral muscular dystrophy (FSHD1)-like symptoms such as kyphosis, progressive muscle dystrophy and skeletal muscle atrophy. It also causes aberrant pre-mRNA splicing of Tnnt3 and Mtmr1, affects the localization and activity of KMT5B, and leads to increased levels of Eid3, resulting in inhibited muscle differentiation. These results suggest that human FSHD1 results from inappropriate overexpression of FRG1 which leads to abnormal alternative splicing of specific pre-mRNAs (PubMed:16341202, PubMed:23720823).</text>
</comment>
<comment type="similarity">
    <text evidence="8">Belongs to the FRG1 family.</text>
</comment>
<dbReference type="EMBL" id="U62105">
    <property type="protein sequence ID" value="AAB39540.1"/>
    <property type="molecule type" value="mRNA"/>
</dbReference>
<dbReference type="EMBL" id="AK079229">
    <property type="protein sequence ID" value="BAC37582.1"/>
    <property type="molecule type" value="mRNA"/>
</dbReference>
<dbReference type="EMBL" id="BC002027">
    <property type="protein sequence ID" value="AAH02027.1"/>
    <property type="molecule type" value="mRNA"/>
</dbReference>
<dbReference type="CCDS" id="CCDS22263.1"/>
<dbReference type="RefSeq" id="NP_038550.2">
    <property type="nucleotide sequence ID" value="NM_013522.3"/>
</dbReference>
<dbReference type="RefSeq" id="XP_017168059.1">
    <property type="nucleotide sequence ID" value="XM_017312570.3"/>
</dbReference>
<dbReference type="PDB" id="2YUG">
    <property type="method" value="NMR"/>
    <property type="chains" value="A=41-188"/>
</dbReference>
<dbReference type="PDBsum" id="2YUG"/>
<dbReference type="SMR" id="P97376"/>
<dbReference type="BioGRID" id="199743">
    <property type="interactions" value="31"/>
</dbReference>
<dbReference type="FunCoup" id="P97376">
    <property type="interactions" value="2859"/>
</dbReference>
<dbReference type="IntAct" id="P97376">
    <property type="interactions" value="3"/>
</dbReference>
<dbReference type="STRING" id="10090.ENSMUSP00000033999"/>
<dbReference type="iPTMnet" id="P97376"/>
<dbReference type="PhosphoSitePlus" id="P97376"/>
<dbReference type="jPOST" id="P97376"/>
<dbReference type="PaxDb" id="10090-ENSMUSP00000033999"/>
<dbReference type="PeptideAtlas" id="P97376"/>
<dbReference type="ProteomicsDB" id="267409"/>
<dbReference type="Pumba" id="P97376"/>
<dbReference type="DNASU" id="14300"/>
<dbReference type="Ensembl" id="ENSMUST00000033999.8">
    <property type="protein sequence ID" value="ENSMUSP00000033999.7"/>
    <property type="gene ID" value="ENSMUSG00000031590.9"/>
</dbReference>
<dbReference type="GeneID" id="14300"/>
<dbReference type="KEGG" id="mmu:14300"/>
<dbReference type="UCSC" id="uc012gcs.1">
    <property type="organism name" value="mouse"/>
</dbReference>
<dbReference type="AGR" id="MGI:893597"/>
<dbReference type="CTD" id="2483"/>
<dbReference type="MGI" id="MGI:893597">
    <property type="gene designation" value="Frg1"/>
</dbReference>
<dbReference type="VEuPathDB" id="HostDB:ENSMUSG00000031590"/>
<dbReference type="eggNOG" id="KOG3962">
    <property type="taxonomic scope" value="Eukaryota"/>
</dbReference>
<dbReference type="GeneTree" id="ENSGT00390000004552"/>
<dbReference type="HOGENOM" id="CLU_094616_0_0_1"/>
<dbReference type="InParanoid" id="P97376"/>
<dbReference type="OMA" id="IEQWEPI"/>
<dbReference type="OrthoDB" id="5539371at2759"/>
<dbReference type="PhylomeDB" id="P97376"/>
<dbReference type="TreeFam" id="TF314108"/>
<dbReference type="BioGRID-ORCS" id="14300">
    <property type="hits" value="7 hits in 76 CRISPR screens"/>
</dbReference>
<dbReference type="ChiTaRS" id="Frg1">
    <property type="organism name" value="mouse"/>
</dbReference>
<dbReference type="EvolutionaryTrace" id="P97376"/>
<dbReference type="PRO" id="PR:P97376"/>
<dbReference type="Proteomes" id="UP000000589">
    <property type="component" value="Chromosome 8"/>
</dbReference>
<dbReference type="RNAct" id="P97376">
    <property type="molecule type" value="protein"/>
</dbReference>
<dbReference type="Bgee" id="ENSMUSG00000031590">
    <property type="expression patterns" value="Expressed in floor plate of midbrain and 257 other cell types or tissues"/>
</dbReference>
<dbReference type="ExpressionAtlas" id="P97376">
    <property type="expression patterns" value="baseline and differential"/>
</dbReference>
<dbReference type="GO" id="GO:0015030">
    <property type="term" value="C:Cajal body"/>
    <property type="evidence" value="ECO:0007669"/>
    <property type="project" value="UniProtKB-SubCell"/>
</dbReference>
<dbReference type="GO" id="GO:0005730">
    <property type="term" value="C:nucleolus"/>
    <property type="evidence" value="ECO:0007669"/>
    <property type="project" value="UniProtKB-SubCell"/>
</dbReference>
<dbReference type="GO" id="GO:0005681">
    <property type="term" value="C:spliceosomal complex"/>
    <property type="evidence" value="ECO:0007669"/>
    <property type="project" value="UniProtKB-KW"/>
</dbReference>
<dbReference type="GO" id="GO:0030018">
    <property type="term" value="C:Z disc"/>
    <property type="evidence" value="ECO:0007669"/>
    <property type="project" value="UniProtKB-SubCell"/>
</dbReference>
<dbReference type="GO" id="GO:0003779">
    <property type="term" value="F:actin binding"/>
    <property type="evidence" value="ECO:0007669"/>
    <property type="project" value="UniProtKB-KW"/>
</dbReference>
<dbReference type="GO" id="GO:0003723">
    <property type="term" value="F:RNA binding"/>
    <property type="evidence" value="ECO:0007669"/>
    <property type="project" value="UniProtKB-KW"/>
</dbReference>
<dbReference type="GO" id="GO:0006397">
    <property type="term" value="P:mRNA processing"/>
    <property type="evidence" value="ECO:0007669"/>
    <property type="project" value="UniProtKB-KW"/>
</dbReference>
<dbReference type="GO" id="GO:0007517">
    <property type="term" value="P:muscle organ development"/>
    <property type="evidence" value="ECO:0007669"/>
    <property type="project" value="UniProtKB-KW"/>
</dbReference>
<dbReference type="GO" id="GO:0008380">
    <property type="term" value="P:RNA splicing"/>
    <property type="evidence" value="ECO:0007669"/>
    <property type="project" value="UniProtKB-KW"/>
</dbReference>
<dbReference type="GO" id="GO:0006364">
    <property type="term" value="P:rRNA processing"/>
    <property type="evidence" value="ECO:0007669"/>
    <property type="project" value="UniProtKB-KW"/>
</dbReference>
<dbReference type="CDD" id="cd23338">
    <property type="entry name" value="beta-trefoil_FSCN_FRG1"/>
    <property type="match status" value="1"/>
</dbReference>
<dbReference type="FunFam" id="2.80.10.50:FF:000031">
    <property type="entry name" value="FRG1 isoform 1"/>
    <property type="match status" value="1"/>
</dbReference>
<dbReference type="Gene3D" id="2.80.10.50">
    <property type="match status" value="1"/>
</dbReference>
<dbReference type="InterPro" id="IPR008999">
    <property type="entry name" value="Actin-crosslinking"/>
</dbReference>
<dbReference type="InterPro" id="IPR010414">
    <property type="entry name" value="FRG1"/>
</dbReference>
<dbReference type="PANTHER" id="PTHR12928">
    <property type="entry name" value="FRG1 PROTEIN"/>
    <property type="match status" value="1"/>
</dbReference>
<dbReference type="PANTHER" id="PTHR12928:SF3">
    <property type="entry name" value="PROTEIN FRG1"/>
    <property type="match status" value="1"/>
</dbReference>
<dbReference type="Pfam" id="PF06229">
    <property type="entry name" value="FRG1"/>
    <property type="match status" value="1"/>
</dbReference>
<dbReference type="SUPFAM" id="SSF50405">
    <property type="entry name" value="Actin-crosslinking proteins"/>
    <property type="match status" value="1"/>
</dbReference>
<keyword id="KW-0002">3D-structure</keyword>
<keyword id="KW-0009">Actin-binding</keyword>
<keyword id="KW-0963">Cytoplasm</keyword>
<keyword id="KW-0507">mRNA processing</keyword>
<keyword id="KW-0508">mRNA splicing</keyword>
<keyword id="KW-0517">Myogenesis</keyword>
<keyword id="KW-0539">Nucleus</keyword>
<keyword id="KW-1185">Reference proteome</keyword>
<keyword id="KW-0690">Ribosome biogenesis</keyword>
<keyword id="KW-0694">RNA-binding</keyword>
<keyword id="KW-0698">rRNA processing</keyword>
<keyword id="KW-0747">Spliceosome</keyword>
<evidence type="ECO:0000250" key="1"/>
<evidence type="ECO:0000250" key="2">
    <source>
        <dbReference type="UniProtKB" id="Q14331"/>
    </source>
</evidence>
<evidence type="ECO:0000255" key="3"/>
<evidence type="ECO:0000256" key="4">
    <source>
        <dbReference type="SAM" id="MobiDB-lite"/>
    </source>
</evidence>
<evidence type="ECO:0000269" key="5">
    <source>
    </source>
</evidence>
<evidence type="ECO:0000269" key="6">
    <source>
    </source>
</evidence>
<evidence type="ECO:0000269" key="7">
    <source>
    </source>
</evidence>
<evidence type="ECO:0000305" key="8"/>
<evidence type="ECO:0000305" key="9">
    <source>
    </source>
</evidence>
<evidence type="ECO:0000305" key="10">
    <source>
    </source>
</evidence>
<evidence type="ECO:0007829" key="11">
    <source>
        <dbReference type="PDB" id="2YUG"/>
    </source>
</evidence>
<accession>P97376</accession>
<accession>Q99M42</accession>
<gene>
    <name type="primary">Frg1</name>
</gene>
<reference key="1">
    <citation type="journal article" date="1998" name="Gene">
        <title>FRG1, a gene in the FSH muscular dystrophy region on human chromosome 4q35, is highly conserved in vertebrates and invertebrates.</title>
        <authorList>
            <person name="Grewal P.K."/>
            <person name="Todd L.C."/>
            <person name="van der Maarel S."/>
            <person name="Frants R.R."/>
            <person name="Hewitt J.E."/>
        </authorList>
    </citation>
    <scope>NUCLEOTIDE SEQUENCE [MRNA]</scope>
    <source>
        <strain>NIH Swiss</strain>
    </source>
</reference>
<reference key="2">
    <citation type="journal article" date="2005" name="Science">
        <title>The transcriptional landscape of the mammalian genome.</title>
        <authorList>
            <person name="Carninci P."/>
            <person name="Kasukawa T."/>
            <person name="Katayama S."/>
            <person name="Gough J."/>
            <person name="Frith M.C."/>
            <person name="Maeda N."/>
            <person name="Oyama R."/>
            <person name="Ravasi T."/>
            <person name="Lenhard B."/>
            <person name="Wells C."/>
            <person name="Kodzius R."/>
            <person name="Shimokawa K."/>
            <person name="Bajic V.B."/>
            <person name="Brenner S.E."/>
            <person name="Batalov S."/>
            <person name="Forrest A.R."/>
            <person name="Zavolan M."/>
            <person name="Davis M.J."/>
            <person name="Wilming L.G."/>
            <person name="Aidinis V."/>
            <person name="Allen J.E."/>
            <person name="Ambesi-Impiombato A."/>
            <person name="Apweiler R."/>
            <person name="Aturaliya R.N."/>
            <person name="Bailey T.L."/>
            <person name="Bansal M."/>
            <person name="Baxter L."/>
            <person name="Beisel K.W."/>
            <person name="Bersano T."/>
            <person name="Bono H."/>
            <person name="Chalk A.M."/>
            <person name="Chiu K.P."/>
            <person name="Choudhary V."/>
            <person name="Christoffels A."/>
            <person name="Clutterbuck D.R."/>
            <person name="Crowe M.L."/>
            <person name="Dalla E."/>
            <person name="Dalrymple B.P."/>
            <person name="de Bono B."/>
            <person name="Della Gatta G."/>
            <person name="di Bernardo D."/>
            <person name="Down T."/>
            <person name="Engstrom P."/>
            <person name="Fagiolini M."/>
            <person name="Faulkner G."/>
            <person name="Fletcher C.F."/>
            <person name="Fukushima T."/>
            <person name="Furuno M."/>
            <person name="Futaki S."/>
            <person name="Gariboldi M."/>
            <person name="Georgii-Hemming P."/>
            <person name="Gingeras T.R."/>
            <person name="Gojobori T."/>
            <person name="Green R.E."/>
            <person name="Gustincich S."/>
            <person name="Harbers M."/>
            <person name="Hayashi Y."/>
            <person name="Hensch T.K."/>
            <person name="Hirokawa N."/>
            <person name="Hill D."/>
            <person name="Huminiecki L."/>
            <person name="Iacono M."/>
            <person name="Ikeo K."/>
            <person name="Iwama A."/>
            <person name="Ishikawa T."/>
            <person name="Jakt M."/>
            <person name="Kanapin A."/>
            <person name="Katoh M."/>
            <person name="Kawasawa Y."/>
            <person name="Kelso J."/>
            <person name="Kitamura H."/>
            <person name="Kitano H."/>
            <person name="Kollias G."/>
            <person name="Krishnan S.P."/>
            <person name="Kruger A."/>
            <person name="Kummerfeld S.K."/>
            <person name="Kurochkin I.V."/>
            <person name="Lareau L.F."/>
            <person name="Lazarevic D."/>
            <person name="Lipovich L."/>
            <person name="Liu J."/>
            <person name="Liuni S."/>
            <person name="McWilliam S."/>
            <person name="Madan Babu M."/>
            <person name="Madera M."/>
            <person name="Marchionni L."/>
            <person name="Matsuda H."/>
            <person name="Matsuzawa S."/>
            <person name="Miki H."/>
            <person name="Mignone F."/>
            <person name="Miyake S."/>
            <person name="Morris K."/>
            <person name="Mottagui-Tabar S."/>
            <person name="Mulder N."/>
            <person name="Nakano N."/>
            <person name="Nakauchi H."/>
            <person name="Ng P."/>
            <person name="Nilsson R."/>
            <person name="Nishiguchi S."/>
            <person name="Nishikawa S."/>
            <person name="Nori F."/>
            <person name="Ohara O."/>
            <person name="Okazaki Y."/>
            <person name="Orlando V."/>
            <person name="Pang K.C."/>
            <person name="Pavan W.J."/>
            <person name="Pavesi G."/>
            <person name="Pesole G."/>
            <person name="Petrovsky N."/>
            <person name="Piazza S."/>
            <person name="Reed J."/>
            <person name="Reid J.F."/>
            <person name="Ring B.Z."/>
            <person name="Ringwald M."/>
            <person name="Rost B."/>
            <person name="Ruan Y."/>
            <person name="Salzberg S.L."/>
            <person name="Sandelin A."/>
            <person name="Schneider C."/>
            <person name="Schoenbach C."/>
            <person name="Sekiguchi K."/>
            <person name="Semple C.A."/>
            <person name="Seno S."/>
            <person name="Sessa L."/>
            <person name="Sheng Y."/>
            <person name="Shibata Y."/>
            <person name="Shimada H."/>
            <person name="Shimada K."/>
            <person name="Silva D."/>
            <person name="Sinclair B."/>
            <person name="Sperling S."/>
            <person name="Stupka E."/>
            <person name="Sugiura K."/>
            <person name="Sultana R."/>
            <person name="Takenaka Y."/>
            <person name="Taki K."/>
            <person name="Tammoja K."/>
            <person name="Tan S.L."/>
            <person name="Tang S."/>
            <person name="Taylor M.S."/>
            <person name="Tegner J."/>
            <person name="Teichmann S.A."/>
            <person name="Ueda H.R."/>
            <person name="van Nimwegen E."/>
            <person name="Verardo R."/>
            <person name="Wei C.L."/>
            <person name="Yagi K."/>
            <person name="Yamanishi H."/>
            <person name="Zabarovsky E."/>
            <person name="Zhu S."/>
            <person name="Zimmer A."/>
            <person name="Hide W."/>
            <person name="Bult C."/>
            <person name="Grimmond S.M."/>
            <person name="Teasdale R.D."/>
            <person name="Liu E.T."/>
            <person name="Brusic V."/>
            <person name="Quackenbush J."/>
            <person name="Wahlestedt C."/>
            <person name="Mattick J.S."/>
            <person name="Hume D.A."/>
            <person name="Kai C."/>
            <person name="Sasaki D."/>
            <person name="Tomaru Y."/>
            <person name="Fukuda S."/>
            <person name="Kanamori-Katayama M."/>
            <person name="Suzuki M."/>
            <person name="Aoki J."/>
            <person name="Arakawa T."/>
            <person name="Iida J."/>
            <person name="Imamura K."/>
            <person name="Itoh M."/>
            <person name="Kato T."/>
            <person name="Kawaji H."/>
            <person name="Kawagashira N."/>
            <person name="Kawashima T."/>
            <person name="Kojima M."/>
            <person name="Kondo S."/>
            <person name="Konno H."/>
            <person name="Nakano K."/>
            <person name="Ninomiya N."/>
            <person name="Nishio T."/>
            <person name="Okada M."/>
            <person name="Plessy C."/>
            <person name="Shibata K."/>
            <person name="Shiraki T."/>
            <person name="Suzuki S."/>
            <person name="Tagami M."/>
            <person name="Waki K."/>
            <person name="Watahiki A."/>
            <person name="Okamura-Oho Y."/>
            <person name="Suzuki H."/>
            <person name="Kawai J."/>
            <person name="Hayashizaki Y."/>
        </authorList>
    </citation>
    <scope>NUCLEOTIDE SEQUENCE [LARGE SCALE MRNA]</scope>
    <source>
        <strain>C57BL/6J</strain>
        <tissue>Urinary bladder</tissue>
    </source>
</reference>
<reference key="3">
    <citation type="journal article" date="2004" name="Genome Res.">
        <title>The status, quality, and expansion of the NIH full-length cDNA project: the Mammalian Gene Collection (MGC).</title>
        <authorList>
            <consortium name="The MGC Project Team"/>
        </authorList>
    </citation>
    <scope>NUCLEOTIDE SEQUENCE [LARGE SCALE MRNA]</scope>
    <source>
        <tissue>Mammary tumor</tissue>
    </source>
</reference>
<reference key="4">
    <citation type="journal article" date="2006" name="Nature">
        <title>Facioscapulohumeral muscular dystrophy in mice overexpressing FRG1.</title>
        <authorList>
            <person name="Gabellini D."/>
            <person name="D'Antona G."/>
            <person name="Moggio M."/>
            <person name="Prelle A."/>
            <person name="Zecca C."/>
            <person name="Adami R."/>
            <person name="Angeletti B."/>
            <person name="Ciscato P."/>
            <person name="Pellegrino M.A."/>
            <person name="Bottinelli R."/>
            <person name="Green M.R."/>
            <person name="Tupler R."/>
        </authorList>
    </citation>
    <scope>OVEREXPRESSION</scope>
    <scope>SUBCELLULAR LOCATION</scope>
</reference>
<reference key="5">
    <citation type="journal article" date="2010" name="Cell">
        <title>A tissue-specific atlas of mouse protein phosphorylation and expression.</title>
        <authorList>
            <person name="Huttlin E.L."/>
            <person name="Jedrychowski M.P."/>
            <person name="Elias J.E."/>
            <person name="Goswami T."/>
            <person name="Rad R."/>
            <person name="Beausoleil S.A."/>
            <person name="Villen J."/>
            <person name="Haas W."/>
            <person name="Sowa M.E."/>
            <person name="Gygi S.P."/>
        </authorList>
    </citation>
    <scope>IDENTIFICATION BY MASS SPECTROMETRY [LARGE SCALE ANALYSIS]</scope>
    <source>
        <tissue>Spleen</tissue>
    </source>
</reference>
<reference key="6">
    <citation type="journal article" date="2011" name="Differentiation">
        <title>Facioscapulohumeral muscular dystrophy (FSHD) region gene 1 (FRG1) is a dynamic nuclear and sarcomeric protein.</title>
        <authorList>
            <person name="Hanel M.L."/>
            <person name="Sun C.Y."/>
            <person name="Jones T.I."/>
            <person name="Long S.W."/>
            <person name="Zanotti S."/>
            <person name="Milner D."/>
            <person name="Jones P.L."/>
        </authorList>
    </citation>
    <scope>SUBCELLULAR LOCATION</scope>
</reference>
<reference key="7">
    <citation type="journal article" date="2013" name="J. Mol. Cell Biol.">
        <title>FSHD muscular dystrophy region gene 1 binds Suv4-20h1 histone methyltransferase and impairs myogenesis.</title>
        <authorList>
            <person name="Neguembor M.V."/>
            <person name="Xynos A."/>
            <person name="Onorati M.C."/>
            <person name="Caccia R."/>
            <person name="Bortolanza S."/>
            <person name="Godio C."/>
            <person name="Pistoni M."/>
            <person name="Corona D.F."/>
            <person name="Schotta G."/>
            <person name="Gabellini D."/>
        </authorList>
    </citation>
    <scope>FUNCTION</scope>
    <scope>OVEREXPRESSION</scope>
    <scope>INTERACTION WITH KMT5B</scope>
</reference>
<reference key="8">
    <citation type="submission" date="2008-04" db="PDB data bank">
        <title>Solution structure of mouse Frg1 protein.</title>
        <authorList>
            <consortium name="RIKEN structural genomics initiative (RSGI)"/>
        </authorList>
    </citation>
    <scope>STRUCTURE BY NMR OF 41-188</scope>
</reference>